<feature type="chain" id="PRO_0000402111" description="Eukaryotic translation initiation factor 6">
    <location>
        <begin position="1"/>
        <end position="247"/>
    </location>
</feature>
<feature type="modified residue" description="Phosphoserine; by CK1" evidence="1">
    <location>
        <position position="174"/>
    </location>
</feature>
<feature type="modified residue" description="Phosphoserine; by CK1" evidence="1">
    <location>
        <position position="175"/>
    </location>
</feature>
<accession>B8MDN4</accession>
<accession>B8MDN5</accession>
<keyword id="KW-0963">Cytoplasm</keyword>
<keyword id="KW-0396">Initiation factor</keyword>
<keyword id="KW-0539">Nucleus</keyword>
<keyword id="KW-0597">Phosphoprotein</keyword>
<keyword id="KW-0648">Protein biosynthesis</keyword>
<keyword id="KW-1185">Reference proteome</keyword>
<keyword id="KW-0690">Ribosome biogenesis</keyword>
<comment type="function">
    <text evidence="1">Binds to the 60S ribosomal subunit and prevents its association with the 40S ribosomal subunit to form the 80S initiation complex in the cytoplasm. Is also involved in ribosome biogenesis. Associates with pre-60S subunits in the nucleus and is involved in its nuclear export.</text>
</comment>
<comment type="subunit">
    <text evidence="1">Monomer. Associates with the 60S ribosomal subunit.</text>
</comment>
<comment type="subcellular location">
    <subcellularLocation>
        <location evidence="1">Cytoplasm</location>
    </subcellularLocation>
    <subcellularLocation>
        <location evidence="1">Nucleus</location>
        <location evidence="1">Nucleolus</location>
    </subcellularLocation>
    <text evidence="1">Shuttles between cytoplasm and nucleus/nucleolus.</text>
</comment>
<comment type="PTM">
    <text evidence="1">Phosphorylation at Ser-174 and Ser-175 promotes nuclear export.</text>
</comment>
<comment type="similarity">
    <text evidence="1">Belongs to the eIF-6 family.</text>
</comment>
<comment type="sequence caution" evidence="2">
    <conflict type="erroneous gene model prediction">
        <sequence resource="EMBL-CDS" id="EED18264"/>
    </conflict>
</comment>
<comment type="sequence caution" evidence="2">
    <conflict type="erroneous gene model prediction">
        <sequence resource="EMBL-CDS" id="EED18265"/>
    </conflict>
</comment>
<evidence type="ECO:0000255" key="1">
    <source>
        <dbReference type="HAMAP-Rule" id="MF_03132"/>
    </source>
</evidence>
<evidence type="ECO:0000305" key="2"/>
<gene>
    <name type="primary">tif6</name>
    <name type="ORF">TSTA_120150</name>
</gene>
<organism>
    <name type="scientific">Talaromyces stipitatus (strain ATCC 10500 / CBS 375.48 / QM 6759 / NRRL 1006)</name>
    <name type="common">Penicillium stipitatum</name>
    <dbReference type="NCBI Taxonomy" id="441959"/>
    <lineage>
        <taxon>Eukaryota</taxon>
        <taxon>Fungi</taxon>
        <taxon>Dikarya</taxon>
        <taxon>Ascomycota</taxon>
        <taxon>Pezizomycotina</taxon>
        <taxon>Eurotiomycetes</taxon>
        <taxon>Eurotiomycetidae</taxon>
        <taxon>Eurotiales</taxon>
        <taxon>Trichocomaceae</taxon>
        <taxon>Talaromyces</taxon>
        <taxon>Talaromyces sect. Talaromyces</taxon>
    </lineage>
</organism>
<protein>
    <recommendedName>
        <fullName evidence="1">Eukaryotic translation initiation factor 6</fullName>
        <shortName evidence="1">eIF-6</shortName>
    </recommendedName>
</protein>
<proteinExistence type="inferred from homology"/>
<sequence>MAVRAQFENSNEVGVFATLTNSYAIVAIGGSENFYSVFEAELQDVIPICHASIGGTRIVGRLTAGNRKGLLVPTSTTDQELQHLRNSIPDSVKIQRVEERLSALGNVICCNDHVALIHPDLERETEEIIADVLGVEVFRQTVADNVLTGSYMALSNQGGIVHPKTSIRDQDELSSLLQVPLVAGSVNRGSPVVGAGMVVNDWLAVTGLDTTATELSVMESVFRLGEMGAKGLGMGNANKESIVESFY</sequence>
<dbReference type="EMBL" id="EQ962655">
    <property type="protein sequence ID" value="EED18263.1"/>
    <property type="molecule type" value="Genomic_DNA"/>
</dbReference>
<dbReference type="EMBL" id="EQ962655">
    <property type="protein sequence ID" value="EED18264.1"/>
    <property type="status" value="ALT_SEQ"/>
    <property type="molecule type" value="Genomic_DNA"/>
</dbReference>
<dbReference type="EMBL" id="EQ962655">
    <property type="protein sequence ID" value="EED18265.1"/>
    <property type="status" value="ALT_SEQ"/>
    <property type="molecule type" value="Genomic_DNA"/>
</dbReference>
<dbReference type="RefSeq" id="XP_002482255.1">
    <property type="nucleotide sequence ID" value="XM_002482210.1"/>
</dbReference>
<dbReference type="RefSeq" id="XP_002482256.1">
    <property type="nucleotide sequence ID" value="XM_002482211.1"/>
</dbReference>
<dbReference type="RefSeq" id="XP_002482257.1">
    <property type="nucleotide sequence ID" value="XM_002482212.1"/>
</dbReference>
<dbReference type="SMR" id="B8MDN4"/>
<dbReference type="FunCoup" id="B8MDN4">
    <property type="interactions" value="1097"/>
</dbReference>
<dbReference type="STRING" id="441959.B8MDN4"/>
<dbReference type="GeneID" id="8105289"/>
<dbReference type="VEuPathDB" id="FungiDB:TSTA_120150"/>
<dbReference type="eggNOG" id="KOG3185">
    <property type="taxonomic scope" value="Eukaryota"/>
</dbReference>
<dbReference type="HOGENOM" id="CLU_071894_0_0_1"/>
<dbReference type="InParanoid" id="B8MDN4"/>
<dbReference type="OMA" id="WCAFCGM"/>
<dbReference type="OrthoDB" id="4155914at2759"/>
<dbReference type="PhylomeDB" id="B8MDN4"/>
<dbReference type="Proteomes" id="UP000001745">
    <property type="component" value="Unassembled WGS sequence"/>
</dbReference>
<dbReference type="GO" id="GO:0005737">
    <property type="term" value="C:cytoplasm"/>
    <property type="evidence" value="ECO:0007669"/>
    <property type="project" value="UniProtKB-SubCell"/>
</dbReference>
<dbReference type="GO" id="GO:0005730">
    <property type="term" value="C:nucleolus"/>
    <property type="evidence" value="ECO:0007669"/>
    <property type="project" value="UniProtKB-SubCell"/>
</dbReference>
<dbReference type="GO" id="GO:0030687">
    <property type="term" value="C:preribosome, large subunit precursor"/>
    <property type="evidence" value="ECO:0007669"/>
    <property type="project" value="EnsemblFungi"/>
</dbReference>
<dbReference type="GO" id="GO:0043023">
    <property type="term" value="F:ribosomal large subunit binding"/>
    <property type="evidence" value="ECO:0007669"/>
    <property type="project" value="UniProtKB-UniRule"/>
</dbReference>
<dbReference type="GO" id="GO:0003743">
    <property type="term" value="F:translation initiation factor activity"/>
    <property type="evidence" value="ECO:0007669"/>
    <property type="project" value="UniProtKB-UniRule"/>
</dbReference>
<dbReference type="GO" id="GO:1902626">
    <property type="term" value="P:assembly of large subunit precursor of preribosome"/>
    <property type="evidence" value="ECO:0007669"/>
    <property type="project" value="EnsemblFungi"/>
</dbReference>
<dbReference type="GO" id="GO:0042256">
    <property type="term" value="P:cytosolic ribosome assembly"/>
    <property type="evidence" value="ECO:0007669"/>
    <property type="project" value="UniProtKB-UniRule"/>
</dbReference>
<dbReference type="GO" id="GO:0000466">
    <property type="term" value="P:maturation of 5.8S rRNA from tricistronic rRNA transcript (SSU-rRNA, 5.8S rRNA, LSU-rRNA)"/>
    <property type="evidence" value="ECO:0007669"/>
    <property type="project" value="EnsemblFungi"/>
</dbReference>
<dbReference type="GO" id="GO:0000463">
    <property type="term" value="P:maturation of LSU-rRNA from tricistronic rRNA transcript (SSU-rRNA, 5.8S rRNA, LSU-rRNA)"/>
    <property type="evidence" value="ECO:0007669"/>
    <property type="project" value="EnsemblFungi"/>
</dbReference>
<dbReference type="GO" id="GO:0000054">
    <property type="term" value="P:ribosomal subunit export from nucleus"/>
    <property type="evidence" value="ECO:0007669"/>
    <property type="project" value="UniProtKB-UniRule"/>
</dbReference>
<dbReference type="CDD" id="cd00527">
    <property type="entry name" value="IF6"/>
    <property type="match status" value="1"/>
</dbReference>
<dbReference type="FunFam" id="3.75.10.10:FF:000001">
    <property type="entry name" value="Eukaryotic translation initiation factor 6"/>
    <property type="match status" value="1"/>
</dbReference>
<dbReference type="Gene3D" id="3.75.10.10">
    <property type="entry name" value="L-arginine/glycine Amidinotransferase, Chain A"/>
    <property type="match status" value="1"/>
</dbReference>
<dbReference type="HAMAP" id="MF_00032">
    <property type="entry name" value="eIF_6"/>
    <property type="match status" value="1"/>
</dbReference>
<dbReference type="InterPro" id="IPR002769">
    <property type="entry name" value="eIF6"/>
</dbReference>
<dbReference type="NCBIfam" id="TIGR00323">
    <property type="entry name" value="eIF-6"/>
    <property type="match status" value="1"/>
</dbReference>
<dbReference type="PANTHER" id="PTHR10784">
    <property type="entry name" value="TRANSLATION INITIATION FACTOR 6"/>
    <property type="match status" value="1"/>
</dbReference>
<dbReference type="Pfam" id="PF01912">
    <property type="entry name" value="eIF-6"/>
    <property type="match status" value="1"/>
</dbReference>
<dbReference type="PIRSF" id="PIRSF006413">
    <property type="entry name" value="IF-6"/>
    <property type="match status" value="1"/>
</dbReference>
<dbReference type="SMART" id="SM00654">
    <property type="entry name" value="eIF6"/>
    <property type="match status" value="1"/>
</dbReference>
<dbReference type="SUPFAM" id="SSF55909">
    <property type="entry name" value="Pentein"/>
    <property type="match status" value="1"/>
</dbReference>
<name>IF6_TALSN</name>
<reference key="1">
    <citation type="journal article" date="2015" name="Genome Announc.">
        <title>Genome sequence of the AIDS-associated pathogen Penicillium marneffei (ATCC18224) and its near taxonomic relative Talaromyces stipitatus (ATCC10500).</title>
        <authorList>
            <person name="Nierman W.C."/>
            <person name="Fedorova-Abrams N.D."/>
            <person name="Andrianopoulos A."/>
        </authorList>
    </citation>
    <scope>NUCLEOTIDE SEQUENCE [LARGE SCALE GENOMIC DNA]</scope>
    <source>
        <strain>ATCC 10500 / CBS 375.48 / QM 6759 / NRRL 1006</strain>
    </source>
</reference>